<name>SYS1_ENTFA</name>
<proteinExistence type="inferred from homology"/>
<keyword id="KW-0030">Aminoacyl-tRNA synthetase</keyword>
<keyword id="KW-0067">ATP-binding</keyword>
<keyword id="KW-0963">Cytoplasm</keyword>
<keyword id="KW-0436">Ligase</keyword>
<keyword id="KW-0547">Nucleotide-binding</keyword>
<keyword id="KW-0648">Protein biosynthesis</keyword>
<keyword id="KW-1185">Reference proteome</keyword>
<feature type="chain" id="PRO_0000122047" description="Serine--tRNA ligase 1">
    <location>
        <begin position="1"/>
        <end position="423"/>
    </location>
</feature>
<feature type="binding site" evidence="1">
    <location>
        <begin position="231"/>
        <end position="233"/>
    </location>
    <ligand>
        <name>L-serine</name>
        <dbReference type="ChEBI" id="CHEBI:33384"/>
    </ligand>
</feature>
<feature type="binding site" evidence="1">
    <location>
        <begin position="262"/>
        <end position="264"/>
    </location>
    <ligand>
        <name>ATP</name>
        <dbReference type="ChEBI" id="CHEBI:30616"/>
    </ligand>
</feature>
<feature type="binding site" evidence="1">
    <location>
        <position position="285"/>
    </location>
    <ligand>
        <name>L-serine</name>
        <dbReference type="ChEBI" id="CHEBI:33384"/>
    </ligand>
</feature>
<feature type="binding site" evidence="1">
    <location>
        <begin position="349"/>
        <end position="352"/>
    </location>
    <ligand>
        <name>ATP</name>
        <dbReference type="ChEBI" id="CHEBI:30616"/>
    </ligand>
</feature>
<feature type="binding site" evidence="1">
    <location>
        <position position="384"/>
    </location>
    <ligand>
        <name>L-serine</name>
        <dbReference type="ChEBI" id="CHEBI:33384"/>
    </ligand>
</feature>
<reference key="1">
    <citation type="journal article" date="2003" name="Science">
        <title>Role of mobile DNA in the evolution of vancomycin-resistant Enterococcus faecalis.</title>
        <authorList>
            <person name="Paulsen I.T."/>
            <person name="Banerjei L."/>
            <person name="Myers G.S.A."/>
            <person name="Nelson K.E."/>
            <person name="Seshadri R."/>
            <person name="Read T.D."/>
            <person name="Fouts D.E."/>
            <person name="Eisen J.A."/>
            <person name="Gill S.R."/>
            <person name="Heidelberg J.F."/>
            <person name="Tettelin H."/>
            <person name="Dodson R.J."/>
            <person name="Umayam L.A."/>
            <person name="Brinkac L.M."/>
            <person name="Beanan M.J."/>
            <person name="Daugherty S.C."/>
            <person name="DeBoy R.T."/>
            <person name="Durkin S.A."/>
            <person name="Kolonay J.F."/>
            <person name="Madupu R."/>
            <person name="Nelson W.C."/>
            <person name="Vamathevan J.J."/>
            <person name="Tran B."/>
            <person name="Upton J."/>
            <person name="Hansen T."/>
            <person name="Shetty J."/>
            <person name="Khouri H.M."/>
            <person name="Utterback T.R."/>
            <person name="Radune D."/>
            <person name="Ketchum K.A."/>
            <person name="Dougherty B.A."/>
            <person name="Fraser C.M."/>
        </authorList>
    </citation>
    <scope>NUCLEOTIDE SEQUENCE [LARGE SCALE GENOMIC DNA]</scope>
    <source>
        <strain>ATCC 700802 / V583</strain>
    </source>
</reference>
<accession>Q839Q8</accession>
<organism>
    <name type="scientific">Enterococcus faecalis (strain ATCC 700802 / V583)</name>
    <dbReference type="NCBI Taxonomy" id="226185"/>
    <lineage>
        <taxon>Bacteria</taxon>
        <taxon>Bacillati</taxon>
        <taxon>Bacillota</taxon>
        <taxon>Bacilli</taxon>
        <taxon>Lactobacillales</taxon>
        <taxon>Enterococcaceae</taxon>
        <taxon>Enterococcus</taxon>
    </lineage>
</organism>
<gene>
    <name evidence="1" type="primary">serS1</name>
    <name type="synonym">serS-1</name>
    <name type="ordered locus">EF_0100</name>
</gene>
<protein>
    <recommendedName>
        <fullName evidence="1">Serine--tRNA ligase 1</fullName>
        <ecNumber evidence="1">6.1.1.11</ecNumber>
    </recommendedName>
    <alternativeName>
        <fullName evidence="1">Seryl-tRNA synthetase 1</fullName>
        <shortName evidence="1">SerRS 1</shortName>
    </alternativeName>
    <alternativeName>
        <fullName evidence="1">Seryl-tRNA(Ser/Sec) synthetase 1</fullName>
    </alternativeName>
</protein>
<sequence>MLDMKKIRQNVEVVQKKLKTRGVDEEVLLRFLALDEGRRALLVKVEELKKHRNQVSGEIAQLKRAQKDASQQLLNMQEVSEQIKVLDQEVVHLQEQCTAIAERLPNLPHESVPVGADEAANVEVRRWSTPKTFSFEPKPHWEIGEALGILDFERGAKVSGSRFLYYKGLGARLERAVYNFMLDQHVNEHGYTEVIPPYLVNSKAMFGTGQFPKFKEDVFQVAESDLTLIPTAEVPLTNYYNNEILDAQELPIYFTALSPSFRSEAGSAGRDTRGLIRLHQFHKVEMVKFSDAEHSYEELEKMTNNAGDILEKLGLPYRVITLSTGDMGFSAAKTYDLEVWIPAQKTYREISSCSNCEDFQARRALIRYRDKTGHVQYAHTLNGSGLAVGRTVAAILENYQNEDGTVTIPEVLRPYMGGLTKID</sequence>
<evidence type="ECO:0000255" key="1">
    <source>
        <dbReference type="HAMAP-Rule" id="MF_00176"/>
    </source>
</evidence>
<dbReference type="EC" id="6.1.1.11" evidence="1"/>
<dbReference type="EMBL" id="AE016830">
    <property type="protein sequence ID" value="AAO79975.1"/>
    <property type="molecule type" value="Genomic_DNA"/>
</dbReference>
<dbReference type="RefSeq" id="NP_813903.1">
    <property type="nucleotide sequence ID" value="NC_004668.1"/>
</dbReference>
<dbReference type="SMR" id="Q839Q8"/>
<dbReference type="STRING" id="226185.EF_0100"/>
<dbReference type="EnsemblBacteria" id="AAO79975">
    <property type="protein sequence ID" value="AAO79975"/>
    <property type="gene ID" value="EF_0100"/>
</dbReference>
<dbReference type="KEGG" id="efa:EF0100"/>
<dbReference type="PATRIC" id="fig|226185.45.peg.160"/>
<dbReference type="eggNOG" id="COG0172">
    <property type="taxonomic scope" value="Bacteria"/>
</dbReference>
<dbReference type="HOGENOM" id="CLU_023797_1_1_9"/>
<dbReference type="UniPathway" id="UPA00906">
    <property type="reaction ID" value="UER00895"/>
</dbReference>
<dbReference type="Proteomes" id="UP000001415">
    <property type="component" value="Chromosome"/>
</dbReference>
<dbReference type="GO" id="GO:0005737">
    <property type="term" value="C:cytoplasm"/>
    <property type="evidence" value="ECO:0007669"/>
    <property type="project" value="UniProtKB-SubCell"/>
</dbReference>
<dbReference type="GO" id="GO:0005524">
    <property type="term" value="F:ATP binding"/>
    <property type="evidence" value="ECO:0007669"/>
    <property type="project" value="UniProtKB-UniRule"/>
</dbReference>
<dbReference type="GO" id="GO:0140096">
    <property type="term" value="F:catalytic activity, acting on a protein"/>
    <property type="evidence" value="ECO:0007669"/>
    <property type="project" value="UniProtKB-ARBA"/>
</dbReference>
<dbReference type="GO" id="GO:0004828">
    <property type="term" value="F:serine-tRNA ligase activity"/>
    <property type="evidence" value="ECO:0007669"/>
    <property type="project" value="UniProtKB-UniRule"/>
</dbReference>
<dbReference type="GO" id="GO:0016740">
    <property type="term" value="F:transferase activity"/>
    <property type="evidence" value="ECO:0007669"/>
    <property type="project" value="UniProtKB-ARBA"/>
</dbReference>
<dbReference type="GO" id="GO:0016260">
    <property type="term" value="P:selenocysteine biosynthetic process"/>
    <property type="evidence" value="ECO:0007669"/>
    <property type="project" value="UniProtKB-UniRule"/>
</dbReference>
<dbReference type="GO" id="GO:0006434">
    <property type="term" value="P:seryl-tRNA aminoacylation"/>
    <property type="evidence" value="ECO:0007669"/>
    <property type="project" value="UniProtKB-UniRule"/>
</dbReference>
<dbReference type="CDD" id="cd00770">
    <property type="entry name" value="SerRS_core"/>
    <property type="match status" value="1"/>
</dbReference>
<dbReference type="Gene3D" id="3.30.930.10">
    <property type="entry name" value="Bira Bifunctional Protein, Domain 2"/>
    <property type="match status" value="1"/>
</dbReference>
<dbReference type="Gene3D" id="1.10.287.40">
    <property type="entry name" value="Serine-tRNA synthetase, tRNA binding domain"/>
    <property type="match status" value="1"/>
</dbReference>
<dbReference type="HAMAP" id="MF_00176">
    <property type="entry name" value="Ser_tRNA_synth_type1"/>
    <property type="match status" value="1"/>
</dbReference>
<dbReference type="InterPro" id="IPR002314">
    <property type="entry name" value="aa-tRNA-synt_IIb"/>
</dbReference>
<dbReference type="InterPro" id="IPR006195">
    <property type="entry name" value="aa-tRNA-synth_II"/>
</dbReference>
<dbReference type="InterPro" id="IPR045864">
    <property type="entry name" value="aa-tRNA-synth_II/BPL/LPL"/>
</dbReference>
<dbReference type="InterPro" id="IPR002317">
    <property type="entry name" value="Ser-tRNA-ligase_type_1"/>
</dbReference>
<dbReference type="InterPro" id="IPR015866">
    <property type="entry name" value="Ser-tRNA-synth_1_N"/>
</dbReference>
<dbReference type="InterPro" id="IPR042103">
    <property type="entry name" value="SerRS_1_N_sf"/>
</dbReference>
<dbReference type="InterPro" id="IPR033729">
    <property type="entry name" value="SerRS_core"/>
</dbReference>
<dbReference type="InterPro" id="IPR010978">
    <property type="entry name" value="tRNA-bd_arm"/>
</dbReference>
<dbReference type="NCBIfam" id="TIGR00414">
    <property type="entry name" value="serS"/>
    <property type="match status" value="1"/>
</dbReference>
<dbReference type="PANTHER" id="PTHR43697:SF1">
    <property type="entry name" value="SERINE--TRNA LIGASE"/>
    <property type="match status" value="1"/>
</dbReference>
<dbReference type="PANTHER" id="PTHR43697">
    <property type="entry name" value="SERYL-TRNA SYNTHETASE"/>
    <property type="match status" value="1"/>
</dbReference>
<dbReference type="Pfam" id="PF02403">
    <property type="entry name" value="Seryl_tRNA_N"/>
    <property type="match status" value="1"/>
</dbReference>
<dbReference type="Pfam" id="PF00587">
    <property type="entry name" value="tRNA-synt_2b"/>
    <property type="match status" value="1"/>
</dbReference>
<dbReference type="PIRSF" id="PIRSF001529">
    <property type="entry name" value="Ser-tRNA-synth_IIa"/>
    <property type="match status" value="1"/>
</dbReference>
<dbReference type="PRINTS" id="PR00981">
    <property type="entry name" value="TRNASYNTHSER"/>
</dbReference>
<dbReference type="SUPFAM" id="SSF55681">
    <property type="entry name" value="Class II aaRS and biotin synthetases"/>
    <property type="match status" value="1"/>
</dbReference>
<dbReference type="SUPFAM" id="SSF46589">
    <property type="entry name" value="tRNA-binding arm"/>
    <property type="match status" value="1"/>
</dbReference>
<dbReference type="PROSITE" id="PS50862">
    <property type="entry name" value="AA_TRNA_LIGASE_II"/>
    <property type="match status" value="1"/>
</dbReference>
<comment type="function">
    <text evidence="1">Catalyzes the attachment of serine to tRNA(Ser). Is also able to aminoacylate tRNA(Sec) with serine, to form the misacylated tRNA L-seryl-tRNA(Sec), which will be further converted into selenocysteinyl-tRNA(Sec).</text>
</comment>
<comment type="catalytic activity">
    <reaction evidence="1">
        <text>tRNA(Ser) + L-serine + ATP = L-seryl-tRNA(Ser) + AMP + diphosphate + H(+)</text>
        <dbReference type="Rhea" id="RHEA:12292"/>
        <dbReference type="Rhea" id="RHEA-COMP:9669"/>
        <dbReference type="Rhea" id="RHEA-COMP:9703"/>
        <dbReference type="ChEBI" id="CHEBI:15378"/>
        <dbReference type="ChEBI" id="CHEBI:30616"/>
        <dbReference type="ChEBI" id="CHEBI:33019"/>
        <dbReference type="ChEBI" id="CHEBI:33384"/>
        <dbReference type="ChEBI" id="CHEBI:78442"/>
        <dbReference type="ChEBI" id="CHEBI:78533"/>
        <dbReference type="ChEBI" id="CHEBI:456215"/>
        <dbReference type="EC" id="6.1.1.11"/>
    </reaction>
</comment>
<comment type="catalytic activity">
    <reaction evidence="1">
        <text>tRNA(Sec) + L-serine + ATP = L-seryl-tRNA(Sec) + AMP + diphosphate + H(+)</text>
        <dbReference type="Rhea" id="RHEA:42580"/>
        <dbReference type="Rhea" id="RHEA-COMP:9742"/>
        <dbReference type="Rhea" id="RHEA-COMP:10128"/>
        <dbReference type="ChEBI" id="CHEBI:15378"/>
        <dbReference type="ChEBI" id="CHEBI:30616"/>
        <dbReference type="ChEBI" id="CHEBI:33019"/>
        <dbReference type="ChEBI" id="CHEBI:33384"/>
        <dbReference type="ChEBI" id="CHEBI:78442"/>
        <dbReference type="ChEBI" id="CHEBI:78533"/>
        <dbReference type="ChEBI" id="CHEBI:456215"/>
        <dbReference type="EC" id="6.1.1.11"/>
    </reaction>
</comment>
<comment type="pathway">
    <text evidence="1">Aminoacyl-tRNA biosynthesis; selenocysteinyl-tRNA(Sec) biosynthesis; L-seryl-tRNA(Sec) from L-serine and tRNA(Sec): step 1/1.</text>
</comment>
<comment type="subunit">
    <text evidence="1">Homodimer. The tRNA molecule binds across the dimer.</text>
</comment>
<comment type="subcellular location">
    <subcellularLocation>
        <location evidence="1">Cytoplasm</location>
    </subcellularLocation>
</comment>
<comment type="domain">
    <text evidence="1">Consists of two distinct domains, a catalytic core and a N-terminal extension that is involved in tRNA binding.</text>
</comment>
<comment type="similarity">
    <text evidence="1">Belongs to the class-II aminoacyl-tRNA synthetase family. Type-1 seryl-tRNA synthetase subfamily.</text>
</comment>